<dbReference type="EMBL" id="CP000702">
    <property type="protein sequence ID" value="ABQ47191.1"/>
    <property type="molecule type" value="Genomic_DNA"/>
</dbReference>
<dbReference type="RefSeq" id="WP_004082072.1">
    <property type="nucleotide sequence ID" value="NC_009486.1"/>
</dbReference>
<dbReference type="SMR" id="A5ILW8"/>
<dbReference type="STRING" id="390874.Tpet_1177"/>
<dbReference type="KEGG" id="tpt:Tpet_1177"/>
<dbReference type="eggNOG" id="COG0711">
    <property type="taxonomic scope" value="Bacteria"/>
</dbReference>
<dbReference type="HOGENOM" id="CLU_079215_4_5_0"/>
<dbReference type="Proteomes" id="UP000006558">
    <property type="component" value="Chromosome"/>
</dbReference>
<dbReference type="GO" id="GO:0005886">
    <property type="term" value="C:plasma membrane"/>
    <property type="evidence" value="ECO:0007669"/>
    <property type="project" value="UniProtKB-SubCell"/>
</dbReference>
<dbReference type="GO" id="GO:0045259">
    <property type="term" value="C:proton-transporting ATP synthase complex"/>
    <property type="evidence" value="ECO:0007669"/>
    <property type="project" value="UniProtKB-KW"/>
</dbReference>
<dbReference type="GO" id="GO:0046933">
    <property type="term" value="F:proton-transporting ATP synthase activity, rotational mechanism"/>
    <property type="evidence" value="ECO:0007669"/>
    <property type="project" value="UniProtKB-UniRule"/>
</dbReference>
<dbReference type="GO" id="GO:0046961">
    <property type="term" value="F:proton-transporting ATPase activity, rotational mechanism"/>
    <property type="evidence" value="ECO:0007669"/>
    <property type="project" value="TreeGrafter"/>
</dbReference>
<dbReference type="CDD" id="cd06503">
    <property type="entry name" value="ATP-synt_Fo_b"/>
    <property type="match status" value="1"/>
</dbReference>
<dbReference type="Gene3D" id="1.20.5.620">
    <property type="entry name" value="F1F0 ATP synthase subunit B, membrane domain"/>
    <property type="match status" value="1"/>
</dbReference>
<dbReference type="HAMAP" id="MF_01398">
    <property type="entry name" value="ATP_synth_b_bprime"/>
    <property type="match status" value="1"/>
</dbReference>
<dbReference type="InterPro" id="IPR028987">
    <property type="entry name" value="ATP_synth_B-like_membr_sf"/>
</dbReference>
<dbReference type="InterPro" id="IPR002146">
    <property type="entry name" value="ATP_synth_b/b'su_bac/chlpt"/>
</dbReference>
<dbReference type="InterPro" id="IPR005864">
    <property type="entry name" value="ATP_synth_F0_bsu_bac"/>
</dbReference>
<dbReference type="InterPro" id="IPR050059">
    <property type="entry name" value="ATP_synthase_B_chain"/>
</dbReference>
<dbReference type="NCBIfam" id="TIGR01144">
    <property type="entry name" value="ATP_synt_b"/>
    <property type="match status" value="1"/>
</dbReference>
<dbReference type="PANTHER" id="PTHR33445:SF1">
    <property type="entry name" value="ATP SYNTHASE SUBUNIT B"/>
    <property type="match status" value="1"/>
</dbReference>
<dbReference type="PANTHER" id="PTHR33445">
    <property type="entry name" value="ATP SYNTHASE SUBUNIT B', CHLOROPLASTIC"/>
    <property type="match status" value="1"/>
</dbReference>
<dbReference type="Pfam" id="PF00430">
    <property type="entry name" value="ATP-synt_B"/>
    <property type="match status" value="1"/>
</dbReference>
<dbReference type="SUPFAM" id="SSF81573">
    <property type="entry name" value="F1F0 ATP synthase subunit B, membrane domain"/>
    <property type="match status" value="1"/>
</dbReference>
<proteinExistence type="inferred from homology"/>
<feature type="chain" id="PRO_0000368844" description="ATP synthase subunit b">
    <location>
        <begin position="1"/>
        <end position="164"/>
    </location>
</feature>
<feature type="transmembrane region" description="Helical" evidence="1">
    <location>
        <begin position="10"/>
        <end position="32"/>
    </location>
</feature>
<accession>A5ILW8</accession>
<organism>
    <name type="scientific">Thermotoga petrophila (strain ATCC BAA-488 / DSM 13995 / JCM 10881 / RKU-1)</name>
    <dbReference type="NCBI Taxonomy" id="390874"/>
    <lineage>
        <taxon>Bacteria</taxon>
        <taxon>Thermotogati</taxon>
        <taxon>Thermotogota</taxon>
        <taxon>Thermotogae</taxon>
        <taxon>Thermotogales</taxon>
        <taxon>Thermotogaceae</taxon>
        <taxon>Thermotoga</taxon>
    </lineage>
</organism>
<protein>
    <recommendedName>
        <fullName evidence="1">ATP synthase subunit b</fullName>
    </recommendedName>
    <alternativeName>
        <fullName evidence="1">ATP synthase F(0) sector subunit b</fullName>
    </alternativeName>
    <alternativeName>
        <fullName evidence="1">ATPase subunit I</fullName>
    </alternativeName>
    <alternativeName>
        <fullName evidence="1">F-type ATPase subunit b</fullName>
        <shortName evidence="1">F-ATPase subunit b</shortName>
    </alternativeName>
</protein>
<gene>
    <name evidence="1" type="primary">atpF</name>
    <name type="ordered locus">Tpet_1177</name>
</gene>
<name>ATPF_THEP1</name>
<keyword id="KW-0066">ATP synthesis</keyword>
<keyword id="KW-0997">Cell inner membrane</keyword>
<keyword id="KW-1003">Cell membrane</keyword>
<keyword id="KW-0138">CF(0)</keyword>
<keyword id="KW-0375">Hydrogen ion transport</keyword>
<keyword id="KW-0406">Ion transport</keyword>
<keyword id="KW-0472">Membrane</keyword>
<keyword id="KW-0812">Transmembrane</keyword>
<keyword id="KW-1133">Transmembrane helix</keyword>
<keyword id="KW-0813">Transport</keyword>
<reference key="1">
    <citation type="submission" date="2007-05" db="EMBL/GenBank/DDBJ databases">
        <title>Complete sequence of Thermotoga petrophila RKU-1.</title>
        <authorList>
            <consortium name="US DOE Joint Genome Institute"/>
            <person name="Copeland A."/>
            <person name="Lucas S."/>
            <person name="Lapidus A."/>
            <person name="Barry K."/>
            <person name="Glavina del Rio T."/>
            <person name="Dalin E."/>
            <person name="Tice H."/>
            <person name="Pitluck S."/>
            <person name="Sims D."/>
            <person name="Brettin T."/>
            <person name="Bruce D."/>
            <person name="Detter J.C."/>
            <person name="Han C."/>
            <person name="Tapia R."/>
            <person name="Schmutz J."/>
            <person name="Larimer F."/>
            <person name="Land M."/>
            <person name="Hauser L."/>
            <person name="Kyrpides N."/>
            <person name="Mikhailova N."/>
            <person name="Nelson K."/>
            <person name="Gogarten J.P."/>
            <person name="Noll K."/>
            <person name="Richardson P."/>
        </authorList>
    </citation>
    <scope>NUCLEOTIDE SEQUENCE [LARGE SCALE GENOMIC DNA]</scope>
    <source>
        <strain>ATCC BAA-488 / DSM 13995 / JCM 10881 / RKU-1</strain>
    </source>
</reference>
<comment type="function">
    <text evidence="1">F(1)F(0) ATP synthase produces ATP from ADP in the presence of a proton or sodium gradient. F-type ATPases consist of two structural domains, F(1) containing the extramembraneous catalytic core and F(0) containing the membrane proton channel, linked together by a central stalk and a peripheral stalk. During catalysis, ATP synthesis in the catalytic domain of F(1) is coupled via a rotary mechanism of the central stalk subunits to proton translocation.</text>
</comment>
<comment type="function">
    <text evidence="1">Component of the F(0) channel, it forms part of the peripheral stalk, linking F(1) to F(0).</text>
</comment>
<comment type="subunit">
    <text evidence="1">F-type ATPases have 2 components, F(1) - the catalytic core - and F(0) - the membrane proton channel. F(1) has five subunits: alpha(3), beta(3), gamma(1), delta(1), epsilon(1). F(0) has three main subunits: a(1), b(2) and c(10-14). The alpha and beta chains form an alternating ring which encloses part of the gamma chain. F(1) is attached to F(0) by a central stalk formed by the gamma and epsilon chains, while a peripheral stalk is formed by the delta and b chains.</text>
</comment>
<comment type="subcellular location">
    <subcellularLocation>
        <location evidence="1">Cell inner membrane</location>
        <topology evidence="1">Single-pass membrane protein</topology>
    </subcellularLocation>
</comment>
<comment type="similarity">
    <text evidence="1">Belongs to the ATPase B chain family.</text>
</comment>
<evidence type="ECO:0000255" key="1">
    <source>
        <dbReference type="HAMAP-Rule" id="MF_01398"/>
    </source>
</evidence>
<sequence length="164" mass="19295">MGFLEINWTSAAMLMLFVLMVYFLNKFLYTPFIEMAEKRRKKVEEDLKSAEQLKEEAEKMRSEAERFLSEARQRADEIVESARKEAEAIVEEAREKAKKEAQNIVESAKTQIEVEYKKALEQVQERAAELSVILATKLLQKVFQDERARREYLVKILKEEIEKS</sequence>